<protein>
    <recommendedName>
        <fullName evidence="1">Acyl-[acyl-carrier-protein]--UDP-N-acetylglucosamine O-acyltransferase</fullName>
        <shortName evidence="1">UDP-N-acetylglucosamine acyltransferase</shortName>
        <ecNumber evidence="1">2.3.1.129</ecNumber>
    </recommendedName>
</protein>
<evidence type="ECO:0000255" key="1">
    <source>
        <dbReference type="HAMAP-Rule" id="MF_00387"/>
    </source>
</evidence>
<evidence type="ECO:0007829" key="2">
    <source>
        <dbReference type="PDB" id="6OSS"/>
    </source>
</evidence>
<comment type="function">
    <text evidence="1">Involved in the biosynthesis of lipid A, a phosphorylated glycolipid that anchors the lipopolysaccharide to the outer membrane of the cell.</text>
</comment>
<comment type="catalytic activity">
    <reaction evidence="1">
        <text>a (3R)-hydroxyacyl-[ACP] + UDP-N-acetyl-alpha-D-glucosamine = a UDP-3-O-[(3R)-3-hydroxyacyl]-N-acetyl-alpha-D-glucosamine + holo-[ACP]</text>
        <dbReference type="Rhea" id="RHEA:67812"/>
        <dbReference type="Rhea" id="RHEA-COMP:9685"/>
        <dbReference type="Rhea" id="RHEA-COMP:9945"/>
        <dbReference type="ChEBI" id="CHEBI:57705"/>
        <dbReference type="ChEBI" id="CHEBI:64479"/>
        <dbReference type="ChEBI" id="CHEBI:78827"/>
        <dbReference type="ChEBI" id="CHEBI:173225"/>
        <dbReference type="EC" id="2.3.1.129"/>
    </reaction>
</comment>
<comment type="pathway">
    <text evidence="1">Glycolipid biosynthesis; lipid IV(A) biosynthesis; lipid IV(A) from (3R)-3-hydroxytetradecanoyl-[acyl-carrier-protein] and UDP-N-acetyl-alpha-D-glucosamine: step 1/6.</text>
</comment>
<comment type="subunit">
    <text evidence="1">Homotrimer.</text>
</comment>
<comment type="subcellular location">
    <subcellularLocation>
        <location evidence="1">Cytoplasm</location>
    </subcellularLocation>
</comment>
<comment type="similarity">
    <text evidence="1">Belongs to the transferase hexapeptide repeat family. LpxA subfamily.</text>
</comment>
<dbReference type="EC" id="2.3.1.129" evidence="1"/>
<dbReference type="EMBL" id="AM942759">
    <property type="protein sequence ID" value="CAR44497.1"/>
    <property type="molecule type" value="Genomic_DNA"/>
</dbReference>
<dbReference type="RefSeq" id="WP_004245460.1">
    <property type="nucleotide sequence ID" value="NC_010554.1"/>
</dbReference>
<dbReference type="PDB" id="6OSS">
    <property type="method" value="X-ray"/>
    <property type="resolution" value="2.19 A"/>
    <property type="chains" value="A/B/C=1-267"/>
</dbReference>
<dbReference type="PDBsum" id="6OSS"/>
<dbReference type="SMR" id="B4F258"/>
<dbReference type="EnsemblBacteria" id="CAR44497">
    <property type="protein sequence ID" value="CAR44497"/>
    <property type="gene ID" value="PMI2273"/>
</dbReference>
<dbReference type="GeneID" id="6802184"/>
<dbReference type="KEGG" id="pmr:PMI2273"/>
<dbReference type="eggNOG" id="COG1043">
    <property type="taxonomic scope" value="Bacteria"/>
</dbReference>
<dbReference type="HOGENOM" id="CLU_061249_0_0_6"/>
<dbReference type="UniPathway" id="UPA00359">
    <property type="reaction ID" value="UER00477"/>
</dbReference>
<dbReference type="Proteomes" id="UP000008319">
    <property type="component" value="Chromosome"/>
</dbReference>
<dbReference type="GO" id="GO:0005737">
    <property type="term" value="C:cytoplasm"/>
    <property type="evidence" value="ECO:0007669"/>
    <property type="project" value="UniProtKB-SubCell"/>
</dbReference>
<dbReference type="GO" id="GO:0016020">
    <property type="term" value="C:membrane"/>
    <property type="evidence" value="ECO:0007669"/>
    <property type="project" value="GOC"/>
</dbReference>
<dbReference type="GO" id="GO:0008780">
    <property type="term" value="F:acyl-[acyl-carrier-protein]-UDP-N-acetylglucosamine O-acyltransferase activity"/>
    <property type="evidence" value="ECO:0007669"/>
    <property type="project" value="UniProtKB-UniRule"/>
</dbReference>
<dbReference type="GO" id="GO:0009245">
    <property type="term" value="P:lipid A biosynthetic process"/>
    <property type="evidence" value="ECO:0007669"/>
    <property type="project" value="UniProtKB-UniRule"/>
</dbReference>
<dbReference type="CDD" id="cd03351">
    <property type="entry name" value="LbH_UDP-GlcNAc_AT"/>
    <property type="match status" value="1"/>
</dbReference>
<dbReference type="FunFam" id="2.160.10.10:FF:000003">
    <property type="entry name" value="Acyl-[acyl-carrier-protein]--UDP-N-acetylglucosamine O-acyltransferase"/>
    <property type="match status" value="1"/>
</dbReference>
<dbReference type="Gene3D" id="2.160.10.10">
    <property type="entry name" value="Hexapeptide repeat proteins"/>
    <property type="match status" value="1"/>
</dbReference>
<dbReference type="Gene3D" id="1.20.1180.10">
    <property type="entry name" value="Udp N-acetylglucosamine O-acyltransferase, C-terminal domain"/>
    <property type="match status" value="1"/>
</dbReference>
<dbReference type="HAMAP" id="MF_00387">
    <property type="entry name" value="LpxA"/>
    <property type="match status" value="1"/>
</dbReference>
<dbReference type="InterPro" id="IPR029098">
    <property type="entry name" value="Acetyltransf_C"/>
</dbReference>
<dbReference type="InterPro" id="IPR037157">
    <property type="entry name" value="Acetyltransf_C_sf"/>
</dbReference>
<dbReference type="InterPro" id="IPR001451">
    <property type="entry name" value="Hexapep"/>
</dbReference>
<dbReference type="InterPro" id="IPR018357">
    <property type="entry name" value="Hexapep_transf_CS"/>
</dbReference>
<dbReference type="InterPro" id="IPR010137">
    <property type="entry name" value="Lipid_A_LpxA"/>
</dbReference>
<dbReference type="InterPro" id="IPR011004">
    <property type="entry name" value="Trimer_LpxA-like_sf"/>
</dbReference>
<dbReference type="NCBIfam" id="TIGR01852">
    <property type="entry name" value="lipid_A_lpxA"/>
    <property type="match status" value="1"/>
</dbReference>
<dbReference type="NCBIfam" id="NF003657">
    <property type="entry name" value="PRK05289.1"/>
    <property type="match status" value="1"/>
</dbReference>
<dbReference type="PANTHER" id="PTHR43480">
    <property type="entry name" value="ACYL-[ACYL-CARRIER-PROTEIN]--UDP-N-ACETYLGLUCOSAMINE O-ACYLTRANSFERASE"/>
    <property type="match status" value="1"/>
</dbReference>
<dbReference type="PANTHER" id="PTHR43480:SF1">
    <property type="entry name" value="ACYL-[ACYL-CARRIER-PROTEIN]--UDP-N-ACETYLGLUCOSAMINE O-ACYLTRANSFERASE, MITOCHONDRIAL-RELATED"/>
    <property type="match status" value="1"/>
</dbReference>
<dbReference type="Pfam" id="PF13720">
    <property type="entry name" value="Acetyltransf_11"/>
    <property type="match status" value="1"/>
</dbReference>
<dbReference type="Pfam" id="PF00132">
    <property type="entry name" value="Hexapep"/>
    <property type="match status" value="2"/>
</dbReference>
<dbReference type="PIRSF" id="PIRSF000456">
    <property type="entry name" value="UDP-GlcNAc_acltr"/>
    <property type="match status" value="1"/>
</dbReference>
<dbReference type="SUPFAM" id="SSF51161">
    <property type="entry name" value="Trimeric LpxA-like enzymes"/>
    <property type="match status" value="1"/>
</dbReference>
<dbReference type="PROSITE" id="PS00101">
    <property type="entry name" value="HEXAPEP_TRANSFERASES"/>
    <property type="match status" value="2"/>
</dbReference>
<reference key="1">
    <citation type="journal article" date="2008" name="J. Bacteriol.">
        <title>Complete genome sequence of uropathogenic Proteus mirabilis, a master of both adherence and motility.</title>
        <authorList>
            <person name="Pearson M.M."/>
            <person name="Sebaihia M."/>
            <person name="Churcher C."/>
            <person name="Quail M.A."/>
            <person name="Seshasayee A.S."/>
            <person name="Luscombe N.M."/>
            <person name="Abdellah Z."/>
            <person name="Arrosmith C."/>
            <person name="Atkin B."/>
            <person name="Chillingworth T."/>
            <person name="Hauser H."/>
            <person name="Jagels K."/>
            <person name="Moule S."/>
            <person name="Mungall K."/>
            <person name="Norbertczak H."/>
            <person name="Rabbinowitsch E."/>
            <person name="Walker D."/>
            <person name="Whithead S."/>
            <person name="Thomson N.R."/>
            <person name="Rather P.N."/>
            <person name="Parkhill J."/>
            <person name="Mobley H.L.T."/>
        </authorList>
    </citation>
    <scope>NUCLEOTIDE SEQUENCE [LARGE SCALE GENOMIC DNA]</scope>
    <source>
        <strain>HI4320</strain>
    </source>
</reference>
<sequence>MIDKSAVIHPSSIIEEGAVIGANVRIGPFCVIGSHVEIGEGTDIKSHVVINGHTRIGRDNQIYQFASIGEVNQDLKYRGEPTQVIIGDRNLIRESVTIHRGTTQGGNITKIGNDNLLMINTHVAHDCIIGDRCIIANNGTLGGHVTLGDYVIIGGMSAVHQFCQIGSHVMVGGCSGVAQDVPPFVIAQGNHATPYGLNIEGLKRRGFAKEDLHAIRNAYKILYRNGKTLEEAREEIAQLAADNNNQYVKIFSDFLENSAKSNRGIIR</sequence>
<proteinExistence type="evidence at protein level"/>
<keyword id="KW-0002">3D-structure</keyword>
<keyword id="KW-0012">Acyltransferase</keyword>
<keyword id="KW-0963">Cytoplasm</keyword>
<keyword id="KW-0441">Lipid A biosynthesis</keyword>
<keyword id="KW-0444">Lipid biosynthesis</keyword>
<keyword id="KW-0443">Lipid metabolism</keyword>
<keyword id="KW-1185">Reference proteome</keyword>
<keyword id="KW-0677">Repeat</keyword>
<keyword id="KW-0808">Transferase</keyword>
<gene>
    <name evidence="1" type="primary">lpxA</name>
    <name type="ordered locus">PMI2273</name>
</gene>
<organism>
    <name type="scientific">Proteus mirabilis (strain HI4320)</name>
    <dbReference type="NCBI Taxonomy" id="529507"/>
    <lineage>
        <taxon>Bacteria</taxon>
        <taxon>Pseudomonadati</taxon>
        <taxon>Pseudomonadota</taxon>
        <taxon>Gammaproteobacteria</taxon>
        <taxon>Enterobacterales</taxon>
        <taxon>Morganellaceae</taxon>
        <taxon>Proteus</taxon>
    </lineage>
</organism>
<feature type="chain" id="PRO_1000122719" description="Acyl-[acyl-carrier-protein]--UDP-N-acetylglucosamine O-acyltransferase">
    <location>
        <begin position="1"/>
        <end position="267"/>
    </location>
</feature>
<feature type="strand" evidence="2">
    <location>
        <begin position="12"/>
        <end position="14"/>
    </location>
</feature>
<feature type="strand" evidence="2">
    <location>
        <begin position="52"/>
        <end position="56"/>
    </location>
</feature>
<feature type="strand" evidence="2">
    <location>
        <begin position="67"/>
        <end position="70"/>
    </location>
</feature>
<feature type="strand" evidence="2">
    <location>
        <begin position="83"/>
        <end position="86"/>
    </location>
</feature>
<feature type="strand" evidence="2">
    <location>
        <begin position="97"/>
        <end position="99"/>
    </location>
</feature>
<feature type="turn" evidence="2">
    <location>
        <begin position="103"/>
        <end position="106"/>
    </location>
</feature>
<feature type="strand" evidence="2">
    <location>
        <begin position="107"/>
        <end position="111"/>
    </location>
</feature>
<feature type="strand" evidence="2">
    <location>
        <begin position="179"/>
        <end position="181"/>
    </location>
</feature>
<feature type="strand" evidence="2">
    <location>
        <begin position="185"/>
        <end position="188"/>
    </location>
</feature>
<feature type="turn" evidence="2">
    <location>
        <begin position="189"/>
        <end position="192"/>
    </location>
</feature>
<feature type="strand" evidence="2">
    <location>
        <begin position="193"/>
        <end position="197"/>
    </location>
</feature>
<feature type="helix" evidence="2">
    <location>
        <begin position="199"/>
        <end position="205"/>
    </location>
</feature>
<feature type="helix" evidence="2">
    <location>
        <begin position="209"/>
        <end position="223"/>
    </location>
</feature>
<feature type="helix" evidence="2">
    <location>
        <begin position="229"/>
        <end position="242"/>
    </location>
</feature>
<feature type="helix" evidence="2">
    <location>
        <begin position="246"/>
        <end position="258"/>
    </location>
</feature>
<name>LPXA_PROMH</name>
<accession>B4F258</accession>